<dbReference type="EMBL" id="AACD01000139">
    <property type="protein sequence ID" value="EAA59671.1"/>
    <property type="molecule type" value="Genomic_DNA"/>
</dbReference>
<dbReference type="EMBL" id="BN001302">
    <property type="protein sequence ID" value="CBF73778.1"/>
    <property type="molecule type" value="Genomic_DNA"/>
</dbReference>
<dbReference type="RefSeq" id="XP_681318.1">
    <property type="nucleotide sequence ID" value="XM_676226.1"/>
</dbReference>
<dbReference type="SMR" id="Q5AUI1"/>
<dbReference type="STRING" id="227321.Q5AUI1"/>
<dbReference type="EnsemblFungi" id="CBF73778">
    <property type="protein sequence ID" value="CBF73778"/>
    <property type="gene ID" value="ANIA_08049"/>
</dbReference>
<dbReference type="KEGG" id="ani:ANIA_08049"/>
<dbReference type="VEuPathDB" id="FungiDB:AN8049"/>
<dbReference type="eggNOG" id="KOG3456">
    <property type="taxonomic scope" value="Eukaryota"/>
</dbReference>
<dbReference type="HOGENOM" id="CLU_083053_0_0_1"/>
<dbReference type="InParanoid" id="Q5AUI1"/>
<dbReference type="OMA" id="SMQAPNR"/>
<dbReference type="OrthoDB" id="307899at2759"/>
<dbReference type="Proteomes" id="UP000000560">
    <property type="component" value="Chromosome II"/>
</dbReference>
<dbReference type="GO" id="GO:0005739">
    <property type="term" value="C:mitochondrion"/>
    <property type="evidence" value="ECO:0007669"/>
    <property type="project" value="GOC"/>
</dbReference>
<dbReference type="GO" id="GO:0045271">
    <property type="term" value="C:respiratory chain complex I"/>
    <property type="evidence" value="ECO:0000318"/>
    <property type="project" value="GO_Central"/>
</dbReference>
<dbReference type="GO" id="GO:0006120">
    <property type="term" value="P:mitochondrial electron transport, NADH to ubiquinone"/>
    <property type="evidence" value="ECO:0000318"/>
    <property type="project" value="GO_Central"/>
</dbReference>
<dbReference type="FunFam" id="2.60.260.40:FF:000003">
    <property type="entry name" value="NADH dehydrogenase [ubiquinone] iron-sulfur protein 6, mitochondrial"/>
    <property type="match status" value="1"/>
</dbReference>
<dbReference type="Gene3D" id="2.60.260.40">
    <property type="entry name" value="q5lls5 like domains"/>
    <property type="match status" value="1"/>
</dbReference>
<dbReference type="InterPro" id="IPR019401">
    <property type="entry name" value="Znf_CHCC"/>
</dbReference>
<dbReference type="PANTHER" id="PTHR13156:SF0">
    <property type="entry name" value="NADH DEHYDROGENASE [UBIQUINONE] IRON-SULFUR PROTEIN 6, MITOCHONDRIAL"/>
    <property type="match status" value="1"/>
</dbReference>
<dbReference type="PANTHER" id="PTHR13156">
    <property type="entry name" value="NADH-UBIQUINONE OXIDOREDUCTASE 13 KD-A SUBUNIT"/>
    <property type="match status" value="1"/>
</dbReference>
<dbReference type="Pfam" id="PF10276">
    <property type="entry name" value="zf-CHCC"/>
    <property type="match status" value="1"/>
</dbReference>
<feature type="chain" id="PRO_0000084365" description="Lactobacillus shifted protein">
    <location>
        <begin position="1"/>
        <end position="213"/>
    </location>
</feature>
<feature type="region of interest" description="Disordered" evidence="1">
    <location>
        <begin position="28"/>
        <end position="56"/>
    </location>
</feature>
<feature type="region of interest" description="Disordered" evidence="1">
    <location>
        <begin position="182"/>
        <end position="213"/>
    </location>
</feature>
<feature type="compositionally biased region" description="Polar residues" evidence="1">
    <location>
        <begin position="28"/>
        <end position="38"/>
    </location>
</feature>
<sequence length="213" mass="23399">MLLPTVRSRIAALSSRVASRAAYSTTVPRFTENAMQPNDPTPRPAKPNVSETDATPVDSMGAWDAALQESTDAAERVRTMQAPNRKGTWASNQKPRAEAMSGPRFEQTIMHLQPTPMAAIELIHKQPVRWVKDKIVSCDGGGGPLGHPRIFINTDKPEIVPCGYCGLPFAHEHHREYLKSLPTSSYPLEPTGAAEEVNENQRVTEGATGYEQR</sequence>
<proteinExistence type="evidence at protein level"/>
<name>LBSA_EMENI</name>
<gene>
    <name type="primary">lbsA</name>
    <name type="ORF">AN8049</name>
</gene>
<comment type="miscellaneous">
    <text evidence="2">Migration on a 2D-gel is shifted by co-cultivation with L.plantarum.</text>
</comment>
<organism>
    <name type="scientific">Emericella nidulans (strain FGSC A4 / ATCC 38163 / CBS 112.46 / NRRL 194 / M139)</name>
    <name type="common">Aspergillus nidulans</name>
    <dbReference type="NCBI Taxonomy" id="227321"/>
    <lineage>
        <taxon>Eukaryota</taxon>
        <taxon>Fungi</taxon>
        <taxon>Dikarya</taxon>
        <taxon>Ascomycota</taxon>
        <taxon>Pezizomycotina</taxon>
        <taxon>Eurotiomycetes</taxon>
        <taxon>Eurotiomycetidae</taxon>
        <taxon>Eurotiales</taxon>
        <taxon>Aspergillaceae</taxon>
        <taxon>Aspergillus</taxon>
        <taxon>Aspergillus subgen. Nidulantes</taxon>
    </lineage>
</organism>
<accession>Q5AUI1</accession>
<accession>C8V615</accession>
<accession>P84514</accession>
<keyword id="KW-0903">Direct protein sequencing</keyword>
<keyword id="KW-1185">Reference proteome</keyword>
<evidence type="ECO:0000256" key="1">
    <source>
        <dbReference type="SAM" id="MobiDB-lite"/>
    </source>
</evidence>
<evidence type="ECO:0000269" key="2">
    <source>
    </source>
</evidence>
<evidence type="ECO:0000305" key="3"/>
<protein>
    <recommendedName>
        <fullName>Lactobacillus shifted protein</fullName>
    </recommendedName>
</protein>
<reference key="1">
    <citation type="journal article" date="2005" name="Nature">
        <title>Sequencing of Aspergillus nidulans and comparative analysis with A. fumigatus and A. oryzae.</title>
        <authorList>
            <person name="Galagan J.E."/>
            <person name="Calvo S.E."/>
            <person name="Cuomo C."/>
            <person name="Ma L.-J."/>
            <person name="Wortman J.R."/>
            <person name="Batzoglou S."/>
            <person name="Lee S.-I."/>
            <person name="Bastuerkmen M."/>
            <person name="Spevak C.C."/>
            <person name="Clutterbuck J."/>
            <person name="Kapitonov V."/>
            <person name="Jurka J."/>
            <person name="Scazzocchio C."/>
            <person name="Farman M.L."/>
            <person name="Butler J."/>
            <person name="Purcell S."/>
            <person name="Harris S."/>
            <person name="Braus G.H."/>
            <person name="Draht O."/>
            <person name="Busch S."/>
            <person name="D'Enfert C."/>
            <person name="Bouchier C."/>
            <person name="Goldman G.H."/>
            <person name="Bell-Pedersen D."/>
            <person name="Griffiths-Jones S."/>
            <person name="Doonan J.H."/>
            <person name="Yu J."/>
            <person name="Vienken K."/>
            <person name="Pain A."/>
            <person name="Freitag M."/>
            <person name="Selker E.U."/>
            <person name="Archer D.B."/>
            <person name="Penalva M.A."/>
            <person name="Oakley B.R."/>
            <person name="Momany M."/>
            <person name="Tanaka T."/>
            <person name="Kumagai T."/>
            <person name="Asai K."/>
            <person name="Machida M."/>
            <person name="Nierman W.C."/>
            <person name="Denning D.W."/>
            <person name="Caddick M.X."/>
            <person name="Hynes M."/>
            <person name="Paoletti M."/>
            <person name="Fischer R."/>
            <person name="Miller B.L."/>
            <person name="Dyer P.S."/>
            <person name="Sachs M.S."/>
            <person name="Osmani S.A."/>
            <person name="Birren B.W."/>
        </authorList>
    </citation>
    <scope>NUCLEOTIDE SEQUENCE [LARGE SCALE GENOMIC DNA]</scope>
    <source>
        <strain>FGSC A4 / ATCC 38163 / CBS 112.46 / NRRL 194 / M139</strain>
    </source>
</reference>
<reference key="2">
    <citation type="journal article" date="2009" name="Fungal Genet. Biol.">
        <title>The 2008 update of the Aspergillus nidulans genome annotation: a community effort.</title>
        <authorList>
            <person name="Wortman J.R."/>
            <person name="Gilsenan J.M."/>
            <person name="Joardar V."/>
            <person name="Deegan J."/>
            <person name="Clutterbuck J."/>
            <person name="Andersen M.R."/>
            <person name="Archer D."/>
            <person name="Bencina M."/>
            <person name="Braus G."/>
            <person name="Coutinho P."/>
            <person name="von Dohren H."/>
            <person name="Doonan J."/>
            <person name="Driessen A.J."/>
            <person name="Durek P."/>
            <person name="Espeso E."/>
            <person name="Fekete E."/>
            <person name="Flipphi M."/>
            <person name="Estrada C.G."/>
            <person name="Geysens S."/>
            <person name="Goldman G."/>
            <person name="de Groot P.W."/>
            <person name="Hansen K."/>
            <person name="Harris S.D."/>
            <person name="Heinekamp T."/>
            <person name="Helmstaedt K."/>
            <person name="Henrissat B."/>
            <person name="Hofmann G."/>
            <person name="Homan T."/>
            <person name="Horio T."/>
            <person name="Horiuchi H."/>
            <person name="James S."/>
            <person name="Jones M."/>
            <person name="Karaffa L."/>
            <person name="Karanyi Z."/>
            <person name="Kato M."/>
            <person name="Keller N."/>
            <person name="Kelly D.E."/>
            <person name="Kiel J.A."/>
            <person name="Kim J.M."/>
            <person name="van der Klei I.J."/>
            <person name="Klis F.M."/>
            <person name="Kovalchuk A."/>
            <person name="Krasevec N."/>
            <person name="Kubicek C.P."/>
            <person name="Liu B."/>
            <person name="Maccabe A."/>
            <person name="Meyer V."/>
            <person name="Mirabito P."/>
            <person name="Miskei M."/>
            <person name="Mos M."/>
            <person name="Mullins J."/>
            <person name="Nelson D.R."/>
            <person name="Nielsen J."/>
            <person name="Oakley B.R."/>
            <person name="Osmani S.A."/>
            <person name="Pakula T."/>
            <person name="Paszewski A."/>
            <person name="Paulsen I."/>
            <person name="Pilsyk S."/>
            <person name="Pocsi I."/>
            <person name="Punt P.J."/>
            <person name="Ram A.F."/>
            <person name="Ren Q."/>
            <person name="Robellet X."/>
            <person name="Robson G."/>
            <person name="Seiboth B."/>
            <person name="van Solingen P."/>
            <person name="Specht T."/>
            <person name="Sun J."/>
            <person name="Taheri-Talesh N."/>
            <person name="Takeshita N."/>
            <person name="Ussery D."/>
            <person name="vanKuyk P.A."/>
            <person name="Visser H."/>
            <person name="van de Vondervoort P.J."/>
            <person name="de Vries R.P."/>
            <person name="Walton J."/>
            <person name="Xiang X."/>
            <person name="Xiong Y."/>
            <person name="Zeng A.P."/>
            <person name="Brandt B.W."/>
            <person name="Cornell M.J."/>
            <person name="van den Hondel C.A."/>
            <person name="Visser J."/>
            <person name="Oliver S.G."/>
            <person name="Turner G."/>
        </authorList>
    </citation>
    <scope>GENOME REANNOTATION</scope>
    <source>
        <strain>FGSC A4 / ATCC 38163 / CBS 112.46 / NRRL 194 / M139</strain>
    </source>
</reference>
<reference evidence="3" key="3">
    <citation type="journal article" date="2005" name="FEMS Microbiol. Lett.">
        <title>Co-cultivation of antifungal Lactobacillus plantarum MiLAB 393 and Aspergillus nidulans, evaluation of effects on fungal growth and protein expression.</title>
        <authorList>
            <person name="Strom K."/>
            <person name="Schnurer J."/>
            <person name="Melin P."/>
        </authorList>
    </citation>
    <scope>PROTEIN SEQUENCE OF 135-149 AND 179-202</scope>
    <source>
        <strain evidence="2">J283</strain>
        <tissue evidence="2">Mycelium</tissue>
    </source>
</reference>